<reference key="1">
    <citation type="journal article" date="2001" name="Nature">
        <title>Genome sequence of enterohaemorrhagic Escherichia coli O157:H7.</title>
        <authorList>
            <person name="Perna N.T."/>
            <person name="Plunkett G. III"/>
            <person name="Burland V."/>
            <person name="Mau B."/>
            <person name="Glasner J.D."/>
            <person name="Rose D.J."/>
            <person name="Mayhew G.F."/>
            <person name="Evans P.S."/>
            <person name="Gregor J."/>
            <person name="Kirkpatrick H.A."/>
            <person name="Posfai G."/>
            <person name="Hackett J."/>
            <person name="Klink S."/>
            <person name="Boutin A."/>
            <person name="Shao Y."/>
            <person name="Miller L."/>
            <person name="Grotbeck E.J."/>
            <person name="Davis N.W."/>
            <person name="Lim A."/>
            <person name="Dimalanta E.T."/>
            <person name="Potamousis K."/>
            <person name="Apodaca J."/>
            <person name="Anantharaman T.S."/>
            <person name="Lin J."/>
            <person name="Yen G."/>
            <person name="Schwartz D.C."/>
            <person name="Welch R.A."/>
            <person name="Blattner F.R."/>
        </authorList>
    </citation>
    <scope>NUCLEOTIDE SEQUENCE [LARGE SCALE GENOMIC DNA]</scope>
    <source>
        <strain>O157:H7 / EDL933 / ATCC 700927 / EHEC</strain>
    </source>
</reference>
<reference key="2">
    <citation type="journal article" date="2001" name="DNA Res.">
        <title>Complete genome sequence of enterohemorrhagic Escherichia coli O157:H7 and genomic comparison with a laboratory strain K-12.</title>
        <authorList>
            <person name="Hayashi T."/>
            <person name="Makino K."/>
            <person name="Ohnishi M."/>
            <person name="Kurokawa K."/>
            <person name="Ishii K."/>
            <person name="Yokoyama K."/>
            <person name="Han C.-G."/>
            <person name="Ohtsubo E."/>
            <person name="Nakayama K."/>
            <person name="Murata T."/>
            <person name="Tanaka M."/>
            <person name="Tobe T."/>
            <person name="Iida T."/>
            <person name="Takami H."/>
            <person name="Honda T."/>
            <person name="Sasakawa C."/>
            <person name="Ogasawara N."/>
            <person name="Yasunaga T."/>
            <person name="Kuhara S."/>
            <person name="Shiba T."/>
            <person name="Hattori M."/>
            <person name="Shinagawa H."/>
        </authorList>
    </citation>
    <scope>NUCLEOTIDE SEQUENCE [LARGE SCALE GENOMIC DNA]</scope>
    <source>
        <strain>O157:H7 / Sakai / RIMD 0509952 / EHEC</strain>
    </source>
</reference>
<dbReference type="EC" id="6.2.1.5" evidence="2"/>
<dbReference type="EMBL" id="AE005174">
    <property type="protein sequence ID" value="AAG55052.1"/>
    <property type="molecule type" value="Genomic_DNA"/>
</dbReference>
<dbReference type="EMBL" id="BA000007">
    <property type="protein sequence ID" value="BAB34176.1"/>
    <property type="molecule type" value="Genomic_DNA"/>
</dbReference>
<dbReference type="PIR" id="A90723">
    <property type="entry name" value="A90723"/>
</dbReference>
<dbReference type="PIR" id="H85573">
    <property type="entry name" value="H85573"/>
</dbReference>
<dbReference type="RefSeq" id="NP_308780.1">
    <property type="nucleotide sequence ID" value="NC_002695.1"/>
</dbReference>
<dbReference type="RefSeq" id="WP_001048602.1">
    <property type="nucleotide sequence ID" value="NZ_VOAI01000019.1"/>
</dbReference>
<dbReference type="SMR" id="P0A838"/>
<dbReference type="STRING" id="155864.Z0882"/>
<dbReference type="GeneID" id="917490"/>
<dbReference type="GeneID" id="93776757"/>
<dbReference type="KEGG" id="ece:Z0882"/>
<dbReference type="KEGG" id="ecs:ECs_0753"/>
<dbReference type="PATRIC" id="fig|386585.9.peg.871"/>
<dbReference type="eggNOG" id="COG0045">
    <property type="taxonomic scope" value="Bacteria"/>
</dbReference>
<dbReference type="HOGENOM" id="CLU_037430_4_0_6"/>
<dbReference type="OMA" id="ITACDEV"/>
<dbReference type="UniPathway" id="UPA00223">
    <property type="reaction ID" value="UER00999"/>
</dbReference>
<dbReference type="Proteomes" id="UP000000558">
    <property type="component" value="Chromosome"/>
</dbReference>
<dbReference type="Proteomes" id="UP000002519">
    <property type="component" value="Chromosome"/>
</dbReference>
<dbReference type="GO" id="GO:0005829">
    <property type="term" value="C:cytosol"/>
    <property type="evidence" value="ECO:0007669"/>
    <property type="project" value="TreeGrafter"/>
</dbReference>
<dbReference type="GO" id="GO:0042709">
    <property type="term" value="C:succinate-CoA ligase complex"/>
    <property type="evidence" value="ECO:0007669"/>
    <property type="project" value="TreeGrafter"/>
</dbReference>
<dbReference type="GO" id="GO:0005524">
    <property type="term" value="F:ATP binding"/>
    <property type="evidence" value="ECO:0007669"/>
    <property type="project" value="UniProtKB-UniRule"/>
</dbReference>
<dbReference type="GO" id="GO:0000287">
    <property type="term" value="F:magnesium ion binding"/>
    <property type="evidence" value="ECO:0007669"/>
    <property type="project" value="UniProtKB-UniRule"/>
</dbReference>
<dbReference type="GO" id="GO:0004775">
    <property type="term" value="F:succinate-CoA ligase (ADP-forming) activity"/>
    <property type="evidence" value="ECO:0007669"/>
    <property type="project" value="UniProtKB-UniRule"/>
</dbReference>
<dbReference type="GO" id="GO:0004776">
    <property type="term" value="F:succinate-CoA ligase (GDP-forming) activity"/>
    <property type="evidence" value="ECO:0007669"/>
    <property type="project" value="RHEA"/>
</dbReference>
<dbReference type="GO" id="GO:0006104">
    <property type="term" value="P:succinyl-CoA metabolic process"/>
    <property type="evidence" value="ECO:0007669"/>
    <property type="project" value="TreeGrafter"/>
</dbReference>
<dbReference type="GO" id="GO:0006099">
    <property type="term" value="P:tricarboxylic acid cycle"/>
    <property type="evidence" value="ECO:0007669"/>
    <property type="project" value="UniProtKB-UniRule"/>
</dbReference>
<dbReference type="FunFam" id="3.30.1490.20:FF:000002">
    <property type="entry name" value="Succinate--CoA ligase [ADP-forming] subunit beta"/>
    <property type="match status" value="1"/>
</dbReference>
<dbReference type="FunFam" id="3.30.470.20:FF:000002">
    <property type="entry name" value="Succinate--CoA ligase [ADP-forming] subunit beta"/>
    <property type="match status" value="1"/>
</dbReference>
<dbReference type="FunFam" id="3.40.50.261:FF:000001">
    <property type="entry name" value="Succinate--CoA ligase [ADP-forming] subunit beta"/>
    <property type="match status" value="1"/>
</dbReference>
<dbReference type="Gene3D" id="3.30.1490.20">
    <property type="entry name" value="ATP-grasp fold, A domain"/>
    <property type="match status" value="1"/>
</dbReference>
<dbReference type="Gene3D" id="3.30.470.20">
    <property type="entry name" value="ATP-grasp fold, B domain"/>
    <property type="match status" value="1"/>
</dbReference>
<dbReference type="Gene3D" id="3.40.50.261">
    <property type="entry name" value="Succinyl-CoA synthetase domains"/>
    <property type="match status" value="1"/>
</dbReference>
<dbReference type="HAMAP" id="MF_00558">
    <property type="entry name" value="Succ_CoA_beta"/>
    <property type="match status" value="1"/>
</dbReference>
<dbReference type="InterPro" id="IPR011761">
    <property type="entry name" value="ATP-grasp"/>
</dbReference>
<dbReference type="InterPro" id="IPR013650">
    <property type="entry name" value="ATP-grasp_succ-CoA_synth-type"/>
</dbReference>
<dbReference type="InterPro" id="IPR013815">
    <property type="entry name" value="ATP_grasp_subdomain_1"/>
</dbReference>
<dbReference type="InterPro" id="IPR017866">
    <property type="entry name" value="Succ-CoA_synthase_bsu_CS"/>
</dbReference>
<dbReference type="InterPro" id="IPR005811">
    <property type="entry name" value="SUCC_ACL_C"/>
</dbReference>
<dbReference type="InterPro" id="IPR005809">
    <property type="entry name" value="Succ_CoA_ligase-like_bsu"/>
</dbReference>
<dbReference type="InterPro" id="IPR016102">
    <property type="entry name" value="Succinyl-CoA_synth-like"/>
</dbReference>
<dbReference type="NCBIfam" id="NF001913">
    <property type="entry name" value="PRK00696.1"/>
    <property type="match status" value="1"/>
</dbReference>
<dbReference type="NCBIfam" id="TIGR01016">
    <property type="entry name" value="sucCoAbeta"/>
    <property type="match status" value="1"/>
</dbReference>
<dbReference type="PANTHER" id="PTHR11815:SF10">
    <property type="entry name" value="SUCCINATE--COA LIGASE [GDP-FORMING] SUBUNIT BETA, MITOCHONDRIAL"/>
    <property type="match status" value="1"/>
</dbReference>
<dbReference type="PANTHER" id="PTHR11815">
    <property type="entry name" value="SUCCINYL-COA SYNTHETASE BETA CHAIN"/>
    <property type="match status" value="1"/>
</dbReference>
<dbReference type="Pfam" id="PF08442">
    <property type="entry name" value="ATP-grasp_2"/>
    <property type="match status" value="1"/>
</dbReference>
<dbReference type="Pfam" id="PF00549">
    <property type="entry name" value="Ligase_CoA"/>
    <property type="match status" value="1"/>
</dbReference>
<dbReference type="PIRSF" id="PIRSF001554">
    <property type="entry name" value="SucCS_beta"/>
    <property type="match status" value="1"/>
</dbReference>
<dbReference type="SUPFAM" id="SSF56059">
    <property type="entry name" value="Glutathione synthetase ATP-binding domain-like"/>
    <property type="match status" value="1"/>
</dbReference>
<dbReference type="SUPFAM" id="SSF52210">
    <property type="entry name" value="Succinyl-CoA synthetase domains"/>
    <property type="match status" value="1"/>
</dbReference>
<dbReference type="PROSITE" id="PS50975">
    <property type="entry name" value="ATP_GRASP"/>
    <property type="match status" value="1"/>
</dbReference>
<dbReference type="PROSITE" id="PS01217">
    <property type="entry name" value="SUCCINYL_COA_LIG_3"/>
    <property type="match status" value="1"/>
</dbReference>
<proteinExistence type="inferred from homology"/>
<organism>
    <name type="scientific">Escherichia coli O157:H7</name>
    <dbReference type="NCBI Taxonomy" id="83334"/>
    <lineage>
        <taxon>Bacteria</taxon>
        <taxon>Pseudomonadati</taxon>
        <taxon>Pseudomonadota</taxon>
        <taxon>Gammaproteobacteria</taxon>
        <taxon>Enterobacterales</taxon>
        <taxon>Enterobacteriaceae</taxon>
        <taxon>Escherichia</taxon>
    </lineage>
</organism>
<accession>P0A838</accession>
<accession>P07460</accession>
<feature type="chain" id="PRO_0000102833" description="Succinate--CoA ligase [ADP-forming] subunit beta">
    <location>
        <begin position="1"/>
        <end position="388"/>
    </location>
</feature>
<feature type="domain" description="ATP-grasp" evidence="2">
    <location>
        <begin position="9"/>
        <end position="244"/>
    </location>
</feature>
<feature type="binding site" evidence="2">
    <location>
        <position position="46"/>
    </location>
    <ligand>
        <name>ATP</name>
        <dbReference type="ChEBI" id="CHEBI:30616"/>
    </ligand>
</feature>
<feature type="binding site" evidence="2">
    <location>
        <begin position="53"/>
        <end position="55"/>
    </location>
    <ligand>
        <name>ATP</name>
        <dbReference type="ChEBI" id="CHEBI:30616"/>
    </ligand>
</feature>
<feature type="binding site" evidence="2">
    <location>
        <position position="99"/>
    </location>
    <ligand>
        <name>ATP</name>
        <dbReference type="ChEBI" id="CHEBI:30616"/>
    </ligand>
</feature>
<feature type="binding site" evidence="2">
    <location>
        <position position="102"/>
    </location>
    <ligand>
        <name>ATP</name>
        <dbReference type="ChEBI" id="CHEBI:30616"/>
    </ligand>
</feature>
<feature type="binding site" evidence="2">
    <location>
        <position position="107"/>
    </location>
    <ligand>
        <name>ATP</name>
        <dbReference type="ChEBI" id="CHEBI:30616"/>
    </ligand>
</feature>
<feature type="binding site" evidence="2">
    <location>
        <position position="199"/>
    </location>
    <ligand>
        <name>Mg(2+)</name>
        <dbReference type="ChEBI" id="CHEBI:18420"/>
    </ligand>
</feature>
<feature type="binding site" evidence="2">
    <location>
        <position position="213"/>
    </location>
    <ligand>
        <name>Mg(2+)</name>
        <dbReference type="ChEBI" id="CHEBI:18420"/>
    </ligand>
</feature>
<feature type="binding site" evidence="2">
    <location>
        <position position="264"/>
    </location>
    <ligand>
        <name>substrate</name>
        <note>ligand shared with subunit alpha</note>
    </ligand>
</feature>
<feature type="binding site" evidence="2">
    <location>
        <begin position="321"/>
        <end position="323"/>
    </location>
    <ligand>
        <name>substrate</name>
        <note>ligand shared with subunit alpha</note>
    </ligand>
</feature>
<comment type="function">
    <text evidence="2">Succinyl-CoA synthetase functions in the citric acid cycle (TCA), coupling the hydrolysis of succinyl-CoA to the synthesis of either ATP or GTP and thus represents the only step of substrate-level phosphorylation in the TCA. The beta subunit provides nucleotide specificity of the enzyme and binds the substrate succinate, while the binding sites for coenzyme A and phosphate are found in the alpha subunit.</text>
</comment>
<comment type="catalytic activity">
    <reaction evidence="2">
        <text>succinate + ATP + CoA = succinyl-CoA + ADP + phosphate</text>
        <dbReference type="Rhea" id="RHEA:17661"/>
        <dbReference type="ChEBI" id="CHEBI:30031"/>
        <dbReference type="ChEBI" id="CHEBI:30616"/>
        <dbReference type="ChEBI" id="CHEBI:43474"/>
        <dbReference type="ChEBI" id="CHEBI:57287"/>
        <dbReference type="ChEBI" id="CHEBI:57292"/>
        <dbReference type="ChEBI" id="CHEBI:456216"/>
        <dbReference type="EC" id="6.2.1.5"/>
    </reaction>
    <physiologicalReaction direction="right-to-left" evidence="2">
        <dbReference type="Rhea" id="RHEA:17663"/>
    </physiologicalReaction>
</comment>
<comment type="catalytic activity">
    <reaction evidence="2">
        <text>GTP + succinate + CoA = succinyl-CoA + GDP + phosphate</text>
        <dbReference type="Rhea" id="RHEA:22120"/>
        <dbReference type="ChEBI" id="CHEBI:30031"/>
        <dbReference type="ChEBI" id="CHEBI:37565"/>
        <dbReference type="ChEBI" id="CHEBI:43474"/>
        <dbReference type="ChEBI" id="CHEBI:57287"/>
        <dbReference type="ChEBI" id="CHEBI:57292"/>
        <dbReference type="ChEBI" id="CHEBI:58189"/>
    </reaction>
    <physiologicalReaction direction="right-to-left" evidence="2">
        <dbReference type="Rhea" id="RHEA:22122"/>
    </physiologicalReaction>
</comment>
<comment type="cofactor">
    <cofactor evidence="2">
        <name>Mg(2+)</name>
        <dbReference type="ChEBI" id="CHEBI:18420"/>
    </cofactor>
    <text evidence="2">Binds 1 Mg(2+) ion per subunit.</text>
</comment>
<comment type="pathway">
    <text evidence="2">Carbohydrate metabolism; tricarboxylic acid cycle; succinate from succinyl-CoA (ligase route): step 1/1.</text>
</comment>
<comment type="subunit">
    <text evidence="2">Heterotetramer of two alpha and two beta subunits.</text>
</comment>
<comment type="miscellaneous">
    <text evidence="1">Succinyl-CoA synthetase (SCS) of E.coli catalyzes its reaction via three steps that involve phosphoryl enzyme and enzyme-bound succinyl phosphate as intermediates.</text>
</comment>
<comment type="similarity">
    <text evidence="2">Belongs to the succinate/malate CoA ligase beta subunit family.</text>
</comment>
<gene>
    <name evidence="2" type="primary">sucC</name>
    <name type="ordered locus">Z0882</name>
    <name type="ordered locus">ECs0753</name>
</gene>
<sequence length="388" mass="41393">MNLHEYQAKQLFARYGLPAPVGYACTTPREAEEAASKIGAGPWVVKCQVHAGGRGKAGGVKVVNSKEDIRAFAENWLGKRLVTYQTDANGQPVNQILVEAATDIAKELYLGAVVDRSSRRVVFMASTEGGVEIEKVAEETPHLIHKVALDPLTGPMPYQGRELAFKLGLEGKLVQQFTKIFMGLATIFLERDLALIEINPLVITKQGDLICLDGKLGADGNALFRQPDLREMRDQSQEDPREAQAAQWELNYVALDGNIGCMVNGAGLAMGTMDIVKLHGGEPANFLDVGGGATKERVTEAFKIILSDDKVKAVLVNIFGGIVRCDLIADGIIGAVAEVGVNVPVVVRLEGNNAELGAKKLADSGLNIIAAKGLTDAAQQVVAAVEGK</sequence>
<evidence type="ECO:0000250" key="1"/>
<evidence type="ECO:0000255" key="2">
    <source>
        <dbReference type="HAMAP-Rule" id="MF_00558"/>
    </source>
</evidence>
<keyword id="KW-0067">ATP-binding</keyword>
<keyword id="KW-0436">Ligase</keyword>
<keyword id="KW-0460">Magnesium</keyword>
<keyword id="KW-0479">Metal-binding</keyword>
<keyword id="KW-0547">Nucleotide-binding</keyword>
<keyword id="KW-1185">Reference proteome</keyword>
<keyword id="KW-0816">Tricarboxylic acid cycle</keyword>
<protein>
    <recommendedName>
        <fullName evidence="2">Succinate--CoA ligase [ADP-forming] subunit beta</fullName>
        <ecNumber evidence="2">6.2.1.5</ecNumber>
    </recommendedName>
    <alternativeName>
        <fullName evidence="2">Succinyl-CoA synthetase subunit beta</fullName>
        <shortName evidence="2">SCS-beta</shortName>
    </alternativeName>
</protein>
<name>SUCC_ECO57</name>